<proteinExistence type="evidence at transcript level"/>
<protein>
    <recommendedName>
        <fullName>Chorion class A protein Ld19</fullName>
    </recommendedName>
</protein>
<sequence>MNSFALLLVCIQACLVQSVFSQCTSRAAVAADRGIIGGYGLGAPCSLGYGLEAPYGWAGYADFGYPAGAYGIDAYGGIGEGNVAVAGELPVAGTTAVAGQVPIMGAVKFGGDVCAAGSVSIAGKCACGCGEYGYGLGAPYLY</sequence>
<name>CHA7_LYMDI</name>
<evidence type="ECO:0000255" key="1"/>
<evidence type="ECO:0000305" key="2"/>
<comment type="function">
    <text>This protein is one of many from the eggshell of the gypsy moth.</text>
</comment>
<comment type="similarity">
    <text evidence="2">Belongs to the chorion protein family.</text>
</comment>
<dbReference type="EMBL" id="U04664">
    <property type="protein sequence ID" value="AAA67864.1"/>
    <property type="molecule type" value="mRNA"/>
</dbReference>
<dbReference type="GO" id="GO:0042600">
    <property type="term" value="C:egg chorion"/>
    <property type="evidence" value="ECO:0007669"/>
    <property type="project" value="InterPro"/>
</dbReference>
<dbReference type="GO" id="GO:0005213">
    <property type="term" value="F:structural constituent of egg chorion"/>
    <property type="evidence" value="ECO:0007669"/>
    <property type="project" value="InterPro"/>
</dbReference>
<dbReference type="GO" id="GO:0007304">
    <property type="term" value="P:chorion-containing eggshell formation"/>
    <property type="evidence" value="ECO:0007669"/>
    <property type="project" value="InterPro"/>
</dbReference>
<dbReference type="InterPro" id="IPR002635">
    <property type="entry name" value="Chorion"/>
</dbReference>
<dbReference type="Pfam" id="PF01723">
    <property type="entry name" value="Chorion_1"/>
    <property type="match status" value="2"/>
</dbReference>
<keyword id="KW-0677">Repeat</keyword>
<keyword id="KW-0732">Signal</keyword>
<reference key="1">
    <citation type="journal article" date="1994" name="J. Mol. Evol.">
        <title>Evolution of chorion gene families in lepidoptera: characterization of 15 cDNAs from the gypsy moth.</title>
        <authorList>
            <person name="Leclerc R.F."/>
            <person name="Regier J.C."/>
        </authorList>
    </citation>
    <scope>NUCLEOTIDE SEQUENCE [MRNA]</scope>
    <source>
        <tissue>Choriogenic follicle</tissue>
    </source>
</reference>
<accession>P43517</accession>
<organism>
    <name type="scientific">Lymantria dispar</name>
    <name type="common">Gypsy moth</name>
    <name type="synonym">Porthetria dispar</name>
    <dbReference type="NCBI Taxonomy" id="13123"/>
    <lineage>
        <taxon>Eukaryota</taxon>
        <taxon>Metazoa</taxon>
        <taxon>Ecdysozoa</taxon>
        <taxon>Arthropoda</taxon>
        <taxon>Hexapoda</taxon>
        <taxon>Insecta</taxon>
        <taxon>Pterygota</taxon>
        <taxon>Neoptera</taxon>
        <taxon>Endopterygota</taxon>
        <taxon>Lepidoptera</taxon>
        <taxon>Glossata</taxon>
        <taxon>Ditrysia</taxon>
        <taxon>Noctuoidea</taxon>
        <taxon>Erebidae</taxon>
        <taxon>Lymantriinae</taxon>
        <taxon>Lymantria</taxon>
    </lineage>
</organism>
<feature type="signal peptide" evidence="1">
    <location>
        <begin position="1"/>
        <end position="18"/>
    </location>
</feature>
<feature type="chain" id="PRO_0000005393" description="Chorion class A protein Ld19">
    <location>
        <begin position="19"/>
        <end position="142"/>
    </location>
</feature>